<gene>
    <name type="primary">NSS</name>
</gene>
<evidence type="ECO:0000269" key="1">
    <source>
    </source>
</evidence>
<evidence type="ECO:0000269" key="2">
    <source>
    </source>
</evidence>
<evidence type="ECO:0000305" key="3"/>
<keyword id="KW-0945">Host-virus interaction</keyword>
<keyword id="KW-1090">Inhibition of host innate immune response by virus</keyword>
<keyword id="KW-1185">Reference proteome</keyword>
<keyword id="KW-0941">Suppressor of RNA silencing</keyword>
<keyword id="KW-0899">Viral immunoevasion</keyword>
<reference key="1">
    <citation type="journal article" date="1990" name="J. Gen. Virol.">
        <title>The S RNA segment of tomato spotted wilt virus has an ambisense character.</title>
        <authorList>
            <person name="de Haan P."/>
            <person name="Wagemakers L."/>
            <person name="Peters D."/>
            <person name="Goldbach R."/>
        </authorList>
    </citation>
    <scope>NUCLEOTIDE SEQUENCE [GENOMIC RNA]</scope>
</reference>
<reference key="2">
    <citation type="journal article" date="2003" name="J. Virol.">
        <title>Negative-strand tospoviruses and tenuiviruses carry a gene for a suppressor of gene silencing at analogous genomic positions.</title>
        <authorList>
            <person name="Bucher E."/>
            <person name="Sijen T."/>
            <person name="De Haan P."/>
            <person name="Goldbach R."/>
            <person name="Prins M."/>
        </authorList>
    </citation>
    <scope>FUNCTION</scope>
</reference>
<reference key="3">
    <citation type="journal article" date="2019" name="PLoS Pathog.">
        <title>The Orthotospovirus nonstructural protein NSs suppresses plant MYC-regulated jasmonate signaling leading to enhanced vector attraction and performance.</title>
        <authorList>
            <person name="Wu X."/>
            <person name="Xu S."/>
            <person name="Zhao P."/>
            <person name="Zhang X."/>
            <person name="Yao X."/>
            <person name="Sun Y."/>
            <person name="Fang R."/>
            <person name="Ye J."/>
        </authorList>
    </citation>
    <scope>FUNCTION</scope>
    <scope>INTERACTION WITH HOST MYC2</scope>
    <source>
        <strain>isolate TSWV-YN</strain>
    </source>
</reference>
<accession>P26002</accession>
<proteinExistence type="evidence at protein level"/>
<comment type="function">
    <text evidence="1 2">Multifunctional protein that plays two independent roles: viral suppressor of host RNAi (VSR) and viral inducer of host attractiveness to insect vectors (VIA). Acts as a suppressor of RNA-mediated gene silencing, also known as post-transcriptional gene silencing (PTGS), a mechanism of plant viral defense that limits the accumulation of viral RNAs (PubMed:12502849). Also inhibits signal transduction by the phytohormone jasmonate, making the infected plant more attractive to aphids, which are the second host to play a role as a dissemination vector (PubMed:31206553). Acts by binding to and inhibiting MYC2 transcription factor (PubMed:31206553).</text>
</comment>
<comment type="subunit">
    <text evidence="2">Interacts with host MYC2.</text>
</comment>
<comment type="similarity">
    <text evidence="3">Belongs to the tospovirus NS-S protein family.</text>
</comment>
<organismHost>
    <name type="scientific">Frankliniella occidentalis</name>
    <name type="common">Western flower thrips</name>
    <name type="synonym">Euthrips occidentalis</name>
    <dbReference type="NCBI Taxonomy" id="133901"/>
</organismHost>
<organismHost>
    <name type="scientific">Scirtothrips dorsalis</name>
    <name type="common">Chilli thrips</name>
    <dbReference type="NCBI Taxonomy" id="163899"/>
</organismHost>
<organismHost>
    <name type="scientific">Solanum lycopersicum</name>
    <name type="common">Tomato</name>
    <name type="synonym">Lycopersicon esculentum</name>
    <dbReference type="NCBI Taxonomy" id="4081"/>
</organismHost>
<organismHost>
    <name type="scientific">Thrips tabaci</name>
    <dbReference type="NCBI Taxonomy" id="161014"/>
</organismHost>
<dbReference type="EMBL" id="D00645">
    <property type="protein sequence ID" value="BAA00540.1"/>
    <property type="molecule type" value="Genomic_RNA"/>
</dbReference>
<dbReference type="PIR" id="JQ0547">
    <property type="entry name" value="MNVUWC"/>
</dbReference>
<dbReference type="KEGG" id="vg:956580"/>
<dbReference type="Proteomes" id="UP000006674">
    <property type="component" value="Genome"/>
</dbReference>
<dbReference type="GO" id="GO:0052170">
    <property type="term" value="P:symbiont-mediated suppression of host innate immune response"/>
    <property type="evidence" value="ECO:0007669"/>
    <property type="project" value="UniProtKB-KW"/>
</dbReference>
<dbReference type="InterPro" id="IPR004915">
    <property type="entry name" value="NS-S_bunyaviral"/>
</dbReference>
<dbReference type="InterPro" id="IPR053928">
    <property type="entry name" value="NS-S_N_bunyaviral"/>
</dbReference>
<dbReference type="InterPro" id="IPR053929">
    <property type="entry name" value="NS-S_WIV_bunyaviral"/>
</dbReference>
<dbReference type="Pfam" id="PF03231">
    <property type="entry name" value="Tospov_NS-S_N"/>
    <property type="match status" value="1"/>
</dbReference>
<dbReference type="Pfam" id="PF23017">
    <property type="entry name" value="WIV_2"/>
    <property type="match status" value="1"/>
</dbReference>
<dbReference type="PIRSF" id="PIRSF003958">
    <property type="entry name" value="NS-S_TospoV"/>
    <property type="match status" value="1"/>
</dbReference>
<protein>
    <recommendedName>
        <fullName>Non-structural protein NS-S</fullName>
    </recommendedName>
</protein>
<organism>
    <name type="scientific">Tomato spotted wilt virus (strain Brazilian Br-01)</name>
    <name type="common">TSWV</name>
    <dbReference type="NCBI Taxonomy" id="36413"/>
    <lineage>
        <taxon>Viruses</taxon>
        <taxon>Riboviria</taxon>
        <taxon>Orthornavirae</taxon>
        <taxon>Negarnaviricota</taxon>
        <taxon>Polyploviricotina</taxon>
        <taxon>Ellioviricetes</taxon>
        <taxon>Bunyavirales</taxon>
        <taxon>Tospoviridae</taxon>
        <taxon>Orthotospovirus</taxon>
        <taxon>Tomato spotted wilt virus</taxon>
    </lineage>
</organism>
<sequence length="464" mass="52448">MSSSVYESIIQTRASVWGSTASGKAVVDSYWIHELGTGSQLVQTQLYSDSRSKVVLWLYCKVGIFPVKKKRFLSQHVYIPIFDDIDFSINIDNSVLALSVCSNTVNANGVKHQGHLKVLSPAQLHSIESIMNRSDITDRFQLQEKDIIPNDKYIEAANKGSLSCVKEHTYKIEMCYNQALGKVNVLSPNRNVHEWLYSFKPNFNQVESNNRTVNSLAVKSLLMSAENNIMPNSQASTDSHFKLSLWLRVPKVLKQVSIQKLFKVAGDETNKTFYLSIACIPNHNSVETALNITVICKHQLPIRKCKAPFELSMMFSDLKEPYNIVHDPSYPKGSVPMLWLETHTSLHKFFATNLQEDVIIYTLNNLELTPGKLDLGERTLNYSEDAYKRKYFLSKTLECLPSNTQTMSYLDSIQIPSWKIDFARGEIKISPQSISVAKSLLKLDLSGIKKKESKVKEAYASGSK</sequence>
<name>NSS_TSWV1</name>
<feature type="chain" id="PRO_0000221984" description="Non-structural protein NS-S">
    <location>
        <begin position="1"/>
        <end position="464"/>
    </location>
</feature>